<proteinExistence type="evidence at protein level"/>
<keyword id="KW-0378">Hydrolase</keyword>
<keyword id="KW-1185">Reference proteome</keyword>
<organism>
    <name type="scientific">Fusarium oxysporum f. sp. lycopersici (strain 4287 / CBS 123668 / FGSC 9935 / NRRL 34936)</name>
    <name type="common">Fusarium vascular wilt of tomato</name>
    <dbReference type="NCBI Taxonomy" id="426428"/>
    <lineage>
        <taxon>Eukaryota</taxon>
        <taxon>Fungi</taxon>
        <taxon>Dikarya</taxon>
        <taxon>Ascomycota</taxon>
        <taxon>Pezizomycotina</taxon>
        <taxon>Sordariomycetes</taxon>
        <taxon>Hypocreomycetidae</taxon>
        <taxon>Hypocreales</taxon>
        <taxon>Nectriaceae</taxon>
        <taxon>Fusarium</taxon>
        <taxon>Fusarium oxysporum species complex</taxon>
    </lineage>
</organism>
<dbReference type="EC" id="3.1.-.-" evidence="13"/>
<dbReference type="EMBL" id="DS231721">
    <property type="protein sequence ID" value="KNB17119.1"/>
    <property type="molecule type" value="Genomic_DNA"/>
</dbReference>
<dbReference type="RefSeq" id="XP_018255164.1">
    <property type="nucleotide sequence ID" value="XM_018395330.1"/>
</dbReference>
<dbReference type="SMR" id="A0A0D2YG06"/>
<dbReference type="STRING" id="426428.A0A0D2YG06"/>
<dbReference type="ESTHER" id="gibf5-fub4">
    <property type="family name" value="FSH1"/>
</dbReference>
<dbReference type="EnsemblFungi" id="FOXG_15244T0">
    <property type="protein sequence ID" value="FOXG_15244P0"/>
    <property type="gene ID" value="FOXG_15244"/>
</dbReference>
<dbReference type="GeneID" id="28956320"/>
<dbReference type="KEGG" id="fox:FOXG_15244"/>
<dbReference type="VEuPathDB" id="FungiDB:FOXG_15244"/>
<dbReference type="OMA" id="YVESEGP"/>
<dbReference type="OrthoDB" id="24471at110618"/>
<dbReference type="Proteomes" id="UP000009097">
    <property type="component" value="Unassembled WGS sequence"/>
</dbReference>
<dbReference type="GO" id="GO:0005737">
    <property type="term" value="C:cytoplasm"/>
    <property type="evidence" value="ECO:0007669"/>
    <property type="project" value="TreeGrafter"/>
</dbReference>
<dbReference type="GO" id="GO:0005634">
    <property type="term" value="C:nucleus"/>
    <property type="evidence" value="ECO:0007669"/>
    <property type="project" value="TreeGrafter"/>
</dbReference>
<dbReference type="GO" id="GO:0016787">
    <property type="term" value="F:hydrolase activity"/>
    <property type="evidence" value="ECO:0007669"/>
    <property type="project" value="UniProtKB-KW"/>
</dbReference>
<dbReference type="GO" id="GO:0019748">
    <property type="term" value="P:secondary metabolic process"/>
    <property type="evidence" value="ECO:0007669"/>
    <property type="project" value="TreeGrafter"/>
</dbReference>
<dbReference type="Gene3D" id="3.40.50.1820">
    <property type="entry name" value="alpha/beta hydrolase"/>
    <property type="match status" value="1"/>
</dbReference>
<dbReference type="InterPro" id="IPR029058">
    <property type="entry name" value="AB_hydrolase_fold"/>
</dbReference>
<dbReference type="InterPro" id="IPR005645">
    <property type="entry name" value="FSH-like_dom"/>
</dbReference>
<dbReference type="InterPro" id="IPR050593">
    <property type="entry name" value="LovG"/>
</dbReference>
<dbReference type="PANTHER" id="PTHR48070:SF4">
    <property type="entry name" value="ESTERASE ALNB"/>
    <property type="match status" value="1"/>
</dbReference>
<dbReference type="PANTHER" id="PTHR48070">
    <property type="entry name" value="ESTERASE OVCA2"/>
    <property type="match status" value="1"/>
</dbReference>
<dbReference type="Pfam" id="PF03959">
    <property type="entry name" value="FSH1"/>
    <property type="match status" value="1"/>
</dbReference>
<dbReference type="SUPFAM" id="SSF53474">
    <property type="entry name" value="alpha/beta-Hydrolases"/>
    <property type="match status" value="1"/>
</dbReference>
<protein>
    <recommendedName>
        <fullName evidence="11">Hydrolase FUB4</fullName>
        <ecNumber evidence="13">3.1.-.-</ecNumber>
    </recommendedName>
    <alternativeName>
        <fullName evidence="11">Fusaric acid biosynthesis protein 4</fullName>
    </alternativeName>
</protein>
<comment type="function">
    <text evidence="2 10">Hydrolase; part of the gene cluster that mediates the biosynthesis of fusaric acid, a mycotoxin with low to moderate toxicity to animals and humans, but with high phytotoxic properties (PubMed:25372119). L-aspartate is suggested as fusaric acid amino acid precursor that is activated and further processed to O-acetyl-L-homoserine by cluster enzymes aspartate kinase FUB3 and homoserine O-acetyltransferase FUB5, as well as enzymes of the primary metabolism (By similarity). The polyketide synthase (PKS) FUB1 generates the triketide trans-2-hexenal which is presumptively released by the hydrolase FUB4 and linked to the NRPS-bound amino acid precursor by NAD(P)-dependent dehydrogenase FUB6 (By similarity). FUB1, FUB4, and the non-canonical NRPS Fub8 may form an enzyme complex (By similarity). Further processing of the NRPS-bound intermediate might be carried out by FUB6 and the sulfhydrylase FUB7, enabling a spontaneous electrocyclization to close the carbon backbone of fusaric acid (By similarity). Dihydrofusaric acid is likely to be released via reduction by the thioester reductase (TR) domain of FUB8 whereupon the final oxidation to fusaric acid may (also) be performed by the FMN-dependent dehydrogenase FUB9 (By similarity).</text>
</comment>
<comment type="pathway">
    <text evidence="10">Mycotoxin biosynthesis.</text>
</comment>
<comment type="biotechnology">
    <text evidence="3 4 5 6 7 8 9">Fusaric acid is phytotoxic to plants such as cotton and banana (PubMed:20955724, PubMed:23922960). It has been shown to induce programmed cell death in plants (PubMed:16868776, PubMed:23838885). In addition to a mild toxicity to animals, fusaric acid exhibits acanthamoebicidal, antioomycete, and antimycobacterial activities (PubMed:17927749, PubMed:21811925, PubMed:22864988).</text>
</comment>
<comment type="similarity">
    <text evidence="12">Belongs to the AB hydrolase 3 family.</text>
</comment>
<gene>
    <name evidence="11" type="primary">FUB4</name>
    <name type="ORF">FOXG_15244</name>
</gene>
<evidence type="ECO:0000250" key="1">
    <source>
        <dbReference type="UniProtKB" id="P38777"/>
    </source>
</evidence>
<evidence type="ECO:0000250" key="2">
    <source>
        <dbReference type="UniProtKB" id="S0DRW4"/>
    </source>
</evidence>
<evidence type="ECO:0000269" key="3">
    <source>
    </source>
</evidence>
<evidence type="ECO:0000269" key="4">
    <source>
    </source>
</evidence>
<evidence type="ECO:0000269" key="5">
    <source>
    </source>
</evidence>
<evidence type="ECO:0000269" key="6">
    <source>
    </source>
</evidence>
<evidence type="ECO:0000269" key="7">
    <source>
    </source>
</evidence>
<evidence type="ECO:0000269" key="8">
    <source>
    </source>
</evidence>
<evidence type="ECO:0000269" key="9">
    <source>
    </source>
</evidence>
<evidence type="ECO:0000269" key="10">
    <source>
    </source>
</evidence>
<evidence type="ECO:0000303" key="11">
    <source>
    </source>
</evidence>
<evidence type="ECO:0000305" key="12"/>
<evidence type="ECO:0000305" key="13">
    <source>
    </source>
</evidence>
<name>FUB4_FUSO4</name>
<reference key="1">
    <citation type="journal article" date="2010" name="Nature">
        <title>Comparative genomics reveals mobile pathogenicity chromosomes in Fusarium.</title>
        <authorList>
            <person name="Ma L.-J."/>
            <person name="van der Does H.C."/>
            <person name="Borkovich K.A."/>
            <person name="Coleman J.J."/>
            <person name="Daboussi M.-J."/>
            <person name="Di Pietro A."/>
            <person name="Dufresne M."/>
            <person name="Freitag M."/>
            <person name="Grabherr M."/>
            <person name="Henrissat B."/>
            <person name="Houterman P.M."/>
            <person name="Kang S."/>
            <person name="Shim W.-B."/>
            <person name="Woloshuk C."/>
            <person name="Xie X."/>
            <person name="Xu J.-R."/>
            <person name="Antoniw J."/>
            <person name="Baker S.E."/>
            <person name="Bluhm B.H."/>
            <person name="Breakspear A."/>
            <person name="Brown D.W."/>
            <person name="Butchko R.A.E."/>
            <person name="Chapman S."/>
            <person name="Coulson R."/>
            <person name="Coutinho P.M."/>
            <person name="Danchin E.G.J."/>
            <person name="Diener A."/>
            <person name="Gale L.R."/>
            <person name="Gardiner D.M."/>
            <person name="Goff S."/>
            <person name="Hammond-Kosack K.E."/>
            <person name="Hilburn K."/>
            <person name="Hua-Van A."/>
            <person name="Jonkers W."/>
            <person name="Kazan K."/>
            <person name="Kodira C.D."/>
            <person name="Koehrsen M."/>
            <person name="Kumar L."/>
            <person name="Lee Y.-H."/>
            <person name="Li L."/>
            <person name="Manners J.M."/>
            <person name="Miranda-Saavedra D."/>
            <person name="Mukherjee M."/>
            <person name="Park G."/>
            <person name="Park J."/>
            <person name="Park S.-Y."/>
            <person name="Proctor R.H."/>
            <person name="Regev A."/>
            <person name="Ruiz-Roldan M.C."/>
            <person name="Sain D."/>
            <person name="Sakthikumar S."/>
            <person name="Sykes S."/>
            <person name="Schwartz D.C."/>
            <person name="Turgeon B.G."/>
            <person name="Wapinski I."/>
            <person name="Yoder O."/>
            <person name="Young S."/>
            <person name="Zeng Q."/>
            <person name="Zhou S."/>
            <person name="Galagan J."/>
            <person name="Cuomo C.A."/>
            <person name="Kistler H.C."/>
            <person name="Rep M."/>
        </authorList>
    </citation>
    <scope>NUCLEOTIDE SEQUENCE [LARGE SCALE GENOMIC DNA]</scope>
    <source>
        <strain>4287 / CBS 123668 / FGSC 9935 / NRRL 34936</strain>
    </source>
</reference>
<reference key="2">
    <citation type="submission" date="2015-03" db="UniProtKB">
        <authorList>
            <consortium name="EnsemblFungi"/>
        </authorList>
    </citation>
    <scope>IDENTIFICATION</scope>
    <source>
        <strain>4287 / CBS 123668 / FGSC 9935 / NRRL 34936</strain>
    </source>
</reference>
<reference key="3">
    <citation type="journal article" date="2006" name="Planta">
        <title>Fusaric acid induces apoptosis in saffron root-tip cells: roles of caspase-like activity, cytochrome c, and H2O2.</title>
        <authorList>
            <person name="Samadi L."/>
            <person name="Shahsavan Behboodi B."/>
        </authorList>
    </citation>
    <scope>BIOTECHNOLOGY</scope>
</reference>
<reference key="4">
    <citation type="journal article" date="2008" name="J. Appl. Microbiol.">
        <title>Bikaverin and fusaric acid from Fusarium oxysporum show antioomycete activity against Phytophthora infestans.</title>
        <authorList>
            <person name="Son S.W."/>
            <person name="Kim H.Y."/>
            <person name="Choi G.J."/>
            <person name="Lim H.K."/>
            <person name="Jang K.S."/>
            <person name="Lee S.O."/>
            <person name="Lee S."/>
            <person name="Sung N.D."/>
            <person name="Kim J.C."/>
        </authorList>
    </citation>
    <scope>BIOTECHNOLOGY</scope>
</reference>
<reference key="5">
    <citation type="journal article" date="2011" name="Arch. Pharm. Res.">
        <title>Antimycobacterial activity of fusaric acid from a mangrove endophyte and its metal complexes.</title>
        <authorList>
            <person name="Pan J.H."/>
            <person name="Chen Y."/>
            <person name="Huang Y.H."/>
            <person name="Tao Y.W."/>
            <person name="Wang J."/>
            <person name="Li Y."/>
            <person name="Peng Y."/>
            <person name="Dong T."/>
            <person name="Lai X.M."/>
            <person name="Lin Y.C."/>
        </authorList>
    </citation>
    <scope>BIOTECHNOLOGY</scope>
</reference>
<reference key="6">
    <citation type="journal article" date="2011" name="Toxicon">
        <title>Phytotoxicity of fusaric acid and analogs to cotton.</title>
        <authorList>
            <person name="Stipanovic R.D."/>
            <person name="Puckhaber L.S."/>
            <person name="Liu J."/>
            <person name="Bell A.A."/>
        </authorList>
    </citation>
    <scope>BIOTECHNOLOGY</scope>
</reference>
<reference key="7">
    <citation type="journal article" date="2012" name="Planta Med.">
        <title>In vitro acanthamoebicidal activity of fusaric acid and dehydrofusaric acid from an endophytic fungus Fusarium sp. Tlau3.</title>
        <authorList>
            <person name="Boonman N."/>
            <person name="Prachya S."/>
            <person name="Boonmee A."/>
            <person name="Kittakoop P."/>
            <person name="Wiyakrutta S."/>
            <person name="Sriubolmas N."/>
            <person name="Warit S."/>
            <person name="Dharmkrong-At Chusattayanond A."/>
        </authorList>
    </citation>
    <scope>BIOTECHNOLOGY</scope>
</reference>
<reference key="8">
    <citation type="journal article" date="2013" name="Planta">
        <title>Fusaric acid induction of programmed cell death modulated through nitric oxide signalling in tobacco suspension cells.</title>
        <authorList>
            <person name="Jiao J."/>
            <person name="Zhou B."/>
            <person name="Zhu X."/>
            <person name="Gao Z."/>
            <person name="Liang Y."/>
        </authorList>
    </citation>
    <scope>BIOTECHNOLOGY</scope>
</reference>
<reference key="9">
    <citation type="journal article" date="2013" name="PLoS ONE">
        <title>Contamination of bananas with beauvericin and fusaric acid produced by Fusarium oxysporum f. sp. cubense.</title>
        <authorList>
            <person name="Li C."/>
            <person name="Zuo C."/>
            <person name="Deng G."/>
            <person name="Kuang R."/>
            <person name="Yang Q."/>
            <person name="Hu C."/>
            <person name="Sheng O."/>
            <person name="Zhang S."/>
            <person name="Ma L."/>
            <person name="Wei Y."/>
            <person name="Yang J."/>
            <person name="Liu S."/>
            <person name="Biswas M.K."/>
            <person name="Viljoen A."/>
            <person name="Yi G."/>
        </authorList>
    </citation>
    <scope>BIOTECHNOLOGY</scope>
</reference>
<reference key="10">
    <citation type="journal article" date="2015" name="Mol. Plant Microbe Interact.">
        <title>Identification of a 12-gene fusaric acid biosynthetic gene cluster in Fusarium species through comparative and functional genomics.</title>
        <authorList>
            <person name="Brown D.W."/>
            <person name="Lee S.H."/>
            <person name="Kim L.H."/>
            <person name="Ryu J.G."/>
            <person name="Lee S."/>
            <person name="Seo Y."/>
            <person name="Kim Y.H."/>
            <person name="Busman M."/>
            <person name="Yun S.H."/>
            <person name="Proctor R.H."/>
            <person name="Lee T."/>
        </authorList>
    </citation>
    <scope>FUNCTION</scope>
    <scope>CATALYTIC ACTIVITY</scope>
</reference>
<feature type="chain" id="PRO_0000437317" description="Hydrolase FUB4">
    <location>
        <begin position="1"/>
        <end position="267"/>
    </location>
</feature>
<feature type="active site" description="Charge relay system" evidence="1">
    <location>
        <position position="93"/>
    </location>
</feature>
<feature type="active site" description="Charge relay system" evidence="1">
    <location>
        <position position="183"/>
    </location>
</feature>
<feature type="active site" description="Charge relay system" evidence="1">
    <location>
        <position position="243"/>
    </location>
</feature>
<accession>A0A0D2YG06</accession>
<sequence length="267" mass="30977">MRFLCLHGYAFSVEVLQQQMEPITAHLPSDWEYEFLEAGMEPTELMLPNLKQVPKPNYSWYNFPYPEDVEEAYERLAAYVESEGPFDGIWGFSQGGSMAALLLLMHQAEHPDTPYPFKMAIFTSAFLPHSFDNGVISWDLTEKNTLEPTYLPGRIDVSHGKKLDWKKDLHTSIEYDMINAVKDELDFPVDLLLRWRPSDIPEKIPVPSVHVRGLKDHYSFVDESVYELFDPEMARKMTHRGGHNFPRYNEELVHFAELIIETVVSLH</sequence>